<comment type="function">
    <text evidence="1">Specifically methylates the adenine in position 1618 of 23S rRNA.</text>
</comment>
<comment type="catalytic activity">
    <reaction evidence="1">
        <text>adenosine(1618) in 23S rRNA + S-adenosyl-L-methionine = N(6)-methyladenosine(1618) in 23S rRNA + S-adenosyl-L-homocysteine + H(+)</text>
        <dbReference type="Rhea" id="RHEA:16497"/>
        <dbReference type="Rhea" id="RHEA-COMP:10229"/>
        <dbReference type="Rhea" id="RHEA-COMP:10231"/>
        <dbReference type="ChEBI" id="CHEBI:15378"/>
        <dbReference type="ChEBI" id="CHEBI:57856"/>
        <dbReference type="ChEBI" id="CHEBI:59789"/>
        <dbReference type="ChEBI" id="CHEBI:74411"/>
        <dbReference type="ChEBI" id="CHEBI:74449"/>
        <dbReference type="EC" id="2.1.1.181"/>
    </reaction>
</comment>
<comment type="subcellular location">
    <subcellularLocation>
        <location evidence="1">Cytoplasm</location>
    </subcellularLocation>
</comment>
<comment type="similarity">
    <text evidence="1">Belongs to the methyltransferase superfamily. METTL16/RlmF family.</text>
</comment>
<comment type="sequence caution" evidence="2">
    <conflict type="erroneous initiation">
        <sequence resource="EMBL-CDS" id="ABB65371"/>
    </conflict>
</comment>
<accession>Q323Y7</accession>
<gene>
    <name evidence="1" type="primary">rlmF</name>
    <name type="ordered locus">SBO_0697</name>
</gene>
<reference key="1">
    <citation type="journal article" date="2005" name="Nucleic Acids Res.">
        <title>Genome dynamics and diversity of Shigella species, the etiologic agents of bacillary dysentery.</title>
        <authorList>
            <person name="Yang F."/>
            <person name="Yang J."/>
            <person name="Zhang X."/>
            <person name="Chen L."/>
            <person name="Jiang Y."/>
            <person name="Yan Y."/>
            <person name="Tang X."/>
            <person name="Wang J."/>
            <person name="Xiong Z."/>
            <person name="Dong J."/>
            <person name="Xue Y."/>
            <person name="Zhu Y."/>
            <person name="Xu X."/>
            <person name="Sun L."/>
            <person name="Chen S."/>
            <person name="Nie H."/>
            <person name="Peng J."/>
            <person name="Xu J."/>
            <person name="Wang Y."/>
            <person name="Yuan Z."/>
            <person name="Wen Y."/>
            <person name="Yao Z."/>
            <person name="Shen Y."/>
            <person name="Qiang B."/>
            <person name="Hou Y."/>
            <person name="Yu J."/>
            <person name="Jin Q."/>
        </authorList>
    </citation>
    <scope>NUCLEOTIDE SEQUENCE [LARGE SCALE GENOMIC DNA]</scope>
    <source>
        <strain>Sb227</strain>
    </source>
</reference>
<sequence length="308" mass="34180">MSAQKPGLHPRNRHHSRYDLATLCQVNPELRQFLTLTPAGEQSVDFANPLAVKALNKALLAHFYAVANWDIPDGFLCPPVPGRADYIHHLADLLAEASGTIPANASILDIGVGANCIYPLIGVHEYGWRFTGSETSSQALSSAQAIISANPGLNRAIRLRRQKESGAIFNGIIHKNEQYDATLCNPPFHDSAAAARAGSERKRRNLGLNKDDALNFGGQQQELWCEGGEVAFIKKMIEESKGFAKQVMWFTSLVSRGENLPPLYRALTDVGAVKVVKKEMAQGQKQSRFIAWTFMNDEQRRRFVNRQR</sequence>
<evidence type="ECO:0000255" key="1">
    <source>
        <dbReference type="HAMAP-Rule" id="MF_01848"/>
    </source>
</evidence>
<evidence type="ECO:0000305" key="2"/>
<protein>
    <recommendedName>
        <fullName evidence="1">Ribosomal RNA large subunit methyltransferase F</fullName>
        <ecNumber evidence="1">2.1.1.181</ecNumber>
    </recommendedName>
    <alternativeName>
        <fullName evidence="1">23S rRNA mA1618 methyltransferase</fullName>
    </alternativeName>
    <alternativeName>
        <fullName evidence="1">rRNA adenine N-6-methyltransferase</fullName>
    </alternativeName>
</protein>
<feature type="chain" id="PRO_0000349968" description="Ribosomal RNA large subunit methyltransferase F">
    <location>
        <begin position="1"/>
        <end position="308"/>
    </location>
</feature>
<proteinExistence type="inferred from homology"/>
<name>RLMF_SHIBS</name>
<dbReference type="EC" id="2.1.1.181" evidence="1"/>
<dbReference type="EMBL" id="CP000036">
    <property type="protein sequence ID" value="ABB65371.1"/>
    <property type="status" value="ALT_INIT"/>
    <property type="molecule type" value="Genomic_DNA"/>
</dbReference>
<dbReference type="RefSeq" id="WP_001275941.1">
    <property type="nucleotide sequence ID" value="NC_007613.1"/>
</dbReference>
<dbReference type="SMR" id="Q323Y7"/>
<dbReference type="GeneID" id="93776621"/>
<dbReference type="KEGG" id="sbo:SBO_0697"/>
<dbReference type="HOGENOM" id="CLU_027534_3_0_6"/>
<dbReference type="Proteomes" id="UP000007067">
    <property type="component" value="Chromosome"/>
</dbReference>
<dbReference type="GO" id="GO:0005737">
    <property type="term" value="C:cytoplasm"/>
    <property type="evidence" value="ECO:0007669"/>
    <property type="project" value="UniProtKB-SubCell"/>
</dbReference>
<dbReference type="GO" id="GO:0052907">
    <property type="term" value="F:23S rRNA (adenine(1618)-N(6))-methyltransferase activity"/>
    <property type="evidence" value="ECO:0007669"/>
    <property type="project" value="UniProtKB-EC"/>
</dbReference>
<dbReference type="GO" id="GO:0070475">
    <property type="term" value="P:rRNA base methylation"/>
    <property type="evidence" value="ECO:0007669"/>
    <property type="project" value="TreeGrafter"/>
</dbReference>
<dbReference type="FunFam" id="3.40.50.150:FF:000045">
    <property type="entry name" value="Ribosomal RNA large subunit methyltransferase F"/>
    <property type="match status" value="1"/>
</dbReference>
<dbReference type="Gene3D" id="3.40.50.150">
    <property type="entry name" value="Vaccinia Virus protein VP39"/>
    <property type="match status" value="1"/>
</dbReference>
<dbReference type="HAMAP" id="MF_01848">
    <property type="entry name" value="23SrRNA_methyltr_F"/>
    <property type="match status" value="1"/>
</dbReference>
<dbReference type="InterPro" id="IPR010286">
    <property type="entry name" value="METTL16/RlmF"/>
</dbReference>
<dbReference type="InterPro" id="IPR016909">
    <property type="entry name" value="rRNA_lsu_MeTfrase_F"/>
</dbReference>
<dbReference type="InterPro" id="IPR029063">
    <property type="entry name" value="SAM-dependent_MTases_sf"/>
</dbReference>
<dbReference type="NCBIfam" id="NF008725">
    <property type="entry name" value="PRK11727.1"/>
    <property type="match status" value="1"/>
</dbReference>
<dbReference type="PANTHER" id="PTHR13393:SF0">
    <property type="entry name" value="RNA N6-ADENOSINE-METHYLTRANSFERASE METTL16"/>
    <property type="match status" value="1"/>
</dbReference>
<dbReference type="PANTHER" id="PTHR13393">
    <property type="entry name" value="SAM-DEPENDENT METHYLTRANSFERASE"/>
    <property type="match status" value="1"/>
</dbReference>
<dbReference type="Pfam" id="PF05971">
    <property type="entry name" value="Methyltransf_10"/>
    <property type="match status" value="1"/>
</dbReference>
<dbReference type="PIRSF" id="PIRSF029038">
    <property type="entry name" value="Mtase_YbiN_prd"/>
    <property type="match status" value="1"/>
</dbReference>
<dbReference type="SUPFAM" id="SSF53335">
    <property type="entry name" value="S-adenosyl-L-methionine-dependent methyltransferases"/>
    <property type="match status" value="1"/>
</dbReference>
<organism>
    <name type="scientific">Shigella boydii serotype 4 (strain Sb227)</name>
    <dbReference type="NCBI Taxonomy" id="300268"/>
    <lineage>
        <taxon>Bacteria</taxon>
        <taxon>Pseudomonadati</taxon>
        <taxon>Pseudomonadota</taxon>
        <taxon>Gammaproteobacteria</taxon>
        <taxon>Enterobacterales</taxon>
        <taxon>Enterobacteriaceae</taxon>
        <taxon>Shigella</taxon>
    </lineage>
</organism>
<keyword id="KW-0963">Cytoplasm</keyword>
<keyword id="KW-0489">Methyltransferase</keyword>
<keyword id="KW-0698">rRNA processing</keyword>
<keyword id="KW-0949">S-adenosyl-L-methionine</keyword>
<keyword id="KW-0808">Transferase</keyword>